<name>LOLB_MARMS</name>
<feature type="signal peptide" evidence="1">
    <location>
        <begin position="1"/>
        <end position="17"/>
    </location>
</feature>
<feature type="chain" id="PRO_0000336611" description="Outer-membrane lipoprotein LolB">
    <location>
        <begin position="18"/>
        <end position="192"/>
    </location>
</feature>
<feature type="lipid moiety-binding region" description="N-palmitoyl cysteine" evidence="1">
    <location>
        <position position="18"/>
    </location>
</feature>
<feature type="lipid moiety-binding region" description="S-diacylglycerol cysteine" evidence="1">
    <location>
        <position position="18"/>
    </location>
</feature>
<protein>
    <recommendedName>
        <fullName evidence="1">Outer-membrane lipoprotein LolB</fullName>
    </recommendedName>
</protein>
<comment type="function">
    <text evidence="1">Plays a critical role in the incorporation of lipoproteins in the outer membrane after they are released by the LolA protein.</text>
</comment>
<comment type="subunit">
    <text evidence="1">Monomer.</text>
</comment>
<comment type="subcellular location">
    <subcellularLocation>
        <location evidence="1">Cell outer membrane</location>
        <topology evidence="1">Lipid-anchor</topology>
    </subcellularLocation>
</comment>
<comment type="similarity">
    <text evidence="1">Belongs to the LolB family.</text>
</comment>
<accession>A6W1C5</accession>
<proteinExistence type="inferred from homology"/>
<keyword id="KW-0998">Cell outer membrane</keyword>
<keyword id="KW-0143">Chaperone</keyword>
<keyword id="KW-0449">Lipoprotein</keyword>
<keyword id="KW-0472">Membrane</keyword>
<keyword id="KW-0564">Palmitate</keyword>
<keyword id="KW-0653">Protein transport</keyword>
<keyword id="KW-0732">Signal</keyword>
<keyword id="KW-0813">Transport</keyword>
<reference key="1">
    <citation type="submission" date="2007-06" db="EMBL/GenBank/DDBJ databases">
        <title>Complete sequence of Marinomonas sp. MWYL1.</title>
        <authorList>
            <consortium name="US DOE Joint Genome Institute"/>
            <person name="Copeland A."/>
            <person name="Lucas S."/>
            <person name="Lapidus A."/>
            <person name="Barry K."/>
            <person name="Glavina del Rio T."/>
            <person name="Dalin E."/>
            <person name="Tice H."/>
            <person name="Pitluck S."/>
            <person name="Kiss H."/>
            <person name="Brettin T."/>
            <person name="Bruce D."/>
            <person name="Detter J.C."/>
            <person name="Han C."/>
            <person name="Schmutz J."/>
            <person name="Larimer F."/>
            <person name="Land M."/>
            <person name="Hauser L."/>
            <person name="Kyrpides N."/>
            <person name="Kim E."/>
            <person name="Johnston A.W.B."/>
            <person name="Todd J.D."/>
            <person name="Rogers R."/>
            <person name="Wexler M."/>
            <person name="Bond P.L."/>
            <person name="Li Y."/>
            <person name="Richardson P."/>
        </authorList>
    </citation>
    <scope>NUCLEOTIDE SEQUENCE [LARGE SCALE GENOMIC DNA]</scope>
    <source>
        <strain>MWYL1</strain>
    </source>
</reference>
<organism>
    <name type="scientific">Marinomonas sp. (strain MWYL1)</name>
    <dbReference type="NCBI Taxonomy" id="400668"/>
    <lineage>
        <taxon>Bacteria</taxon>
        <taxon>Pseudomonadati</taxon>
        <taxon>Pseudomonadota</taxon>
        <taxon>Gammaproteobacteria</taxon>
        <taxon>Oceanospirillales</taxon>
        <taxon>Oceanospirillaceae</taxon>
        <taxon>Marinomonas</taxon>
    </lineage>
</organism>
<gene>
    <name evidence="1" type="primary">lolB</name>
    <name type="ordered locus">Mmwyl1_3602</name>
</gene>
<sequence>MTYRTLCILAFTALISACSSRPTGPTTPPPESVSAISKWETSGRVGIRTKNDAVSGNFNWQKDPKTFALSIVGPFGQGATHLNQSNDGVVTLAYEDTVVTGNNPETLLQQELGWEFPVNQVTYWIRGLAYPNSAAKISKDPDSQLPNKIEQDGWLITYSNFTKVDGLSLPQKMQVSNPPFRVNLIINQWTIQ</sequence>
<evidence type="ECO:0000255" key="1">
    <source>
        <dbReference type="HAMAP-Rule" id="MF_00233"/>
    </source>
</evidence>
<dbReference type="EMBL" id="CP000749">
    <property type="protein sequence ID" value="ABR72504.1"/>
    <property type="molecule type" value="Genomic_DNA"/>
</dbReference>
<dbReference type="SMR" id="A6W1C5"/>
<dbReference type="STRING" id="400668.Mmwyl1_3602"/>
<dbReference type="KEGG" id="mmw:Mmwyl1_3602"/>
<dbReference type="eggNOG" id="COG3017">
    <property type="taxonomic scope" value="Bacteria"/>
</dbReference>
<dbReference type="HOGENOM" id="CLU_092816_2_1_6"/>
<dbReference type="OrthoDB" id="9797618at2"/>
<dbReference type="GO" id="GO:0009279">
    <property type="term" value="C:cell outer membrane"/>
    <property type="evidence" value="ECO:0007669"/>
    <property type="project" value="UniProtKB-SubCell"/>
</dbReference>
<dbReference type="GO" id="GO:0044874">
    <property type="term" value="P:lipoprotein localization to outer membrane"/>
    <property type="evidence" value="ECO:0007669"/>
    <property type="project" value="UniProtKB-UniRule"/>
</dbReference>
<dbReference type="GO" id="GO:0015031">
    <property type="term" value="P:protein transport"/>
    <property type="evidence" value="ECO:0007669"/>
    <property type="project" value="UniProtKB-KW"/>
</dbReference>
<dbReference type="CDD" id="cd16326">
    <property type="entry name" value="LolB"/>
    <property type="match status" value="1"/>
</dbReference>
<dbReference type="Gene3D" id="2.50.20.10">
    <property type="entry name" value="Lipoprotein localisation LolA/LolB/LppX"/>
    <property type="match status" value="1"/>
</dbReference>
<dbReference type="HAMAP" id="MF_00233">
    <property type="entry name" value="LolB"/>
    <property type="match status" value="1"/>
</dbReference>
<dbReference type="InterPro" id="IPR029046">
    <property type="entry name" value="LolA/LolB/LppX"/>
</dbReference>
<dbReference type="InterPro" id="IPR004565">
    <property type="entry name" value="OM_lipoprot_LolB"/>
</dbReference>
<dbReference type="NCBIfam" id="TIGR00548">
    <property type="entry name" value="lolB"/>
    <property type="match status" value="1"/>
</dbReference>
<dbReference type="Pfam" id="PF03550">
    <property type="entry name" value="LolB"/>
    <property type="match status" value="1"/>
</dbReference>
<dbReference type="SUPFAM" id="SSF89392">
    <property type="entry name" value="Prokaryotic lipoproteins and lipoprotein localization factors"/>
    <property type="match status" value="1"/>
</dbReference>
<dbReference type="PROSITE" id="PS51257">
    <property type="entry name" value="PROKAR_LIPOPROTEIN"/>
    <property type="match status" value="1"/>
</dbReference>